<comment type="function">
    <text evidence="1">Pre-mRNA polyadenylation factor that directly interacts with poly(A) polymerase.</text>
</comment>
<comment type="subcellular location">
    <subcellularLocation>
        <location evidence="1">Nucleus</location>
    </subcellularLocation>
</comment>
<comment type="similarity">
    <text evidence="3">Belongs to the FIP1 family.</text>
</comment>
<comment type="sequence caution" evidence="3">
    <conflict type="erroneous gene model prediction">
        <sequence resource="EMBL-CDS" id="EAA64139"/>
    </conflict>
</comment>
<proteinExistence type="inferred from homology"/>
<feature type="chain" id="PRO_0000238512" description="Pre-mRNA polyadenylation factor fip1">
    <location>
        <begin position="1"/>
        <end position="327"/>
    </location>
</feature>
<feature type="region of interest" description="Disordered" evidence="2">
    <location>
        <begin position="1"/>
        <end position="139"/>
    </location>
</feature>
<feature type="region of interest" description="Disordered" evidence="2">
    <location>
        <begin position="283"/>
        <end position="327"/>
    </location>
</feature>
<feature type="compositionally biased region" description="Acidic residues" evidence="2">
    <location>
        <begin position="1"/>
        <end position="14"/>
    </location>
</feature>
<feature type="compositionally biased region" description="Acidic residues" evidence="2">
    <location>
        <begin position="39"/>
        <end position="55"/>
    </location>
</feature>
<feature type="compositionally biased region" description="Polar residues" evidence="2">
    <location>
        <begin position="79"/>
        <end position="122"/>
    </location>
</feature>
<feature type="compositionally biased region" description="Gly residues" evidence="2">
    <location>
        <begin position="284"/>
        <end position="321"/>
    </location>
</feature>
<name>FIP1_EMENI</name>
<organism>
    <name type="scientific">Emericella nidulans (strain FGSC A4 / ATCC 38163 / CBS 112.46 / NRRL 194 / M139)</name>
    <name type="common">Aspergillus nidulans</name>
    <dbReference type="NCBI Taxonomy" id="227321"/>
    <lineage>
        <taxon>Eukaryota</taxon>
        <taxon>Fungi</taxon>
        <taxon>Dikarya</taxon>
        <taxon>Ascomycota</taxon>
        <taxon>Pezizomycotina</taxon>
        <taxon>Eurotiomycetes</taxon>
        <taxon>Eurotiomycetidae</taxon>
        <taxon>Eurotiales</taxon>
        <taxon>Aspergillaceae</taxon>
        <taxon>Aspergillus</taxon>
        <taxon>Aspergillus subgen. Nidulantes</taxon>
    </lineage>
</organism>
<accession>Q5BAJ7</accession>
<accession>C8VNZ9</accession>
<sequence>MSHAMDDDDDDLYDPADAVPVTNPSDPRGPSADAPMNDNVEEEEEEVEEDDEDDFNIITEAPPDAPPPETSHPRHANLRTESQRPTSADSTSAQKSQTPTLTPKVDTSASVPAGTRPTSQKPGSAYPPVHASNIDVNANPVHPATGKPILMTDMDADFPDDDKPWRRPGTDLTDYFNYGFDEFTWASYVLKQQELRKEVGDQKRQLDDMQNFLTMGLPPMPGAQPGAGPAAVSAPPPMPGMPGIPDMNPDMMQGMLASMMSQGLDPSSMDPMSFMQHAQTMMGGQSGAGGGQQGQGGFGGQGGGQSQMGYGNAGGGYGGGRGRGRRW</sequence>
<dbReference type="EMBL" id="AACD01000040">
    <property type="protein sequence ID" value="EAA64139.1"/>
    <property type="status" value="ALT_SEQ"/>
    <property type="molecule type" value="Genomic_DNA"/>
</dbReference>
<dbReference type="EMBL" id="BN001307">
    <property type="protein sequence ID" value="CBF86845.1"/>
    <property type="molecule type" value="Genomic_DNA"/>
</dbReference>
<dbReference type="RefSeq" id="XP_660037.1">
    <property type="nucleotide sequence ID" value="XM_654945.1"/>
</dbReference>
<dbReference type="SMR" id="Q5BAJ7"/>
<dbReference type="FunCoup" id="Q5BAJ7">
    <property type="interactions" value="195"/>
</dbReference>
<dbReference type="STRING" id="227321.Q5BAJ7"/>
<dbReference type="EnsemblFungi" id="CBF86845">
    <property type="protein sequence ID" value="CBF86845"/>
    <property type="gene ID" value="ANIA_02433"/>
</dbReference>
<dbReference type="VEuPathDB" id="FungiDB:AN2433"/>
<dbReference type="eggNOG" id="KOG1049">
    <property type="taxonomic scope" value="Eukaryota"/>
</dbReference>
<dbReference type="HOGENOM" id="CLU_039307_0_0_1"/>
<dbReference type="InParanoid" id="Q5BAJ7"/>
<dbReference type="OMA" id="FDEFTWE"/>
<dbReference type="OrthoDB" id="184876at2759"/>
<dbReference type="Proteomes" id="UP000000560">
    <property type="component" value="Chromosome VII"/>
</dbReference>
<dbReference type="GO" id="GO:0005847">
    <property type="term" value="C:mRNA cleavage and polyadenylation specificity factor complex"/>
    <property type="evidence" value="ECO:0000318"/>
    <property type="project" value="GO_Central"/>
</dbReference>
<dbReference type="GO" id="GO:0006397">
    <property type="term" value="P:mRNA processing"/>
    <property type="evidence" value="ECO:0007669"/>
    <property type="project" value="UniProtKB-KW"/>
</dbReference>
<dbReference type="InterPro" id="IPR007854">
    <property type="entry name" value="Fip1_dom"/>
</dbReference>
<dbReference type="InterPro" id="IPR051187">
    <property type="entry name" value="Pre-mRNA_3'-end_processing_reg"/>
</dbReference>
<dbReference type="PANTHER" id="PTHR13484">
    <property type="entry name" value="FIP1-LIKE 1 PROTEIN"/>
    <property type="match status" value="1"/>
</dbReference>
<dbReference type="PANTHER" id="PTHR13484:SF0">
    <property type="entry name" value="PRE-MRNA 3'-END-PROCESSING FACTOR FIP1"/>
    <property type="match status" value="1"/>
</dbReference>
<dbReference type="Pfam" id="PF05182">
    <property type="entry name" value="Fip1"/>
    <property type="match status" value="1"/>
</dbReference>
<keyword id="KW-0507">mRNA processing</keyword>
<keyword id="KW-0539">Nucleus</keyword>
<keyword id="KW-1185">Reference proteome</keyword>
<gene>
    <name type="primary">fip1</name>
    <name type="ORF">AN2433</name>
</gene>
<reference key="1">
    <citation type="journal article" date="2005" name="Nature">
        <title>Sequencing of Aspergillus nidulans and comparative analysis with A. fumigatus and A. oryzae.</title>
        <authorList>
            <person name="Galagan J.E."/>
            <person name="Calvo S.E."/>
            <person name="Cuomo C."/>
            <person name="Ma L.-J."/>
            <person name="Wortman J.R."/>
            <person name="Batzoglou S."/>
            <person name="Lee S.-I."/>
            <person name="Bastuerkmen M."/>
            <person name="Spevak C.C."/>
            <person name="Clutterbuck J."/>
            <person name="Kapitonov V."/>
            <person name="Jurka J."/>
            <person name="Scazzocchio C."/>
            <person name="Farman M.L."/>
            <person name="Butler J."/>
            <person name="Purcell S."/>
            <person name="Harris S."/>
            <person name="Braus G.H."/>
            <person name="Draht O."/>
            <person name="Busch S."/>
            <person name="D'Enfert C."/>
            <person name="Bouchier C."/>
            <person name="Goldman G.H."/>
            <person name="Bell-Pedersen D."/>
            <person name="Griffiths-Jones S."/>
            <person name="Doonan J.H."/>
            <person name="Yu J."/>
            <person name="Vienken K."/>
            <person name="Pain A."/>
            <person name="Freitag M."/>
            <person name="Selker E.U."/>
            <person name="Archer D.B."/>
            <person name="Penalva M.A."/>
            <person name="Oakley B.R."/>
            <person name="Momany M."/>
            <person name="Tanaka T."/>
            <person name="Kumagai T."/>
            <person name="Asai K."/>
            <person name="Machida M."/>
            <person name="Nierman W.C."/>
            <person name="Denning D.W."/>
            <person name="Caddick M.X."/>
            <person name="Hynes M."/>
            <person name="Paoletti M."/>
            <person name="Fischer R."/>
            <person name="Miller B.L."/>
            <person name="Dyer P.S."/>
            <person name="Sachs M.S."/>
            <person name="Osmani S.A."/>
            <person name="Birren B.W."/>
        </authorList>
    </citation>
    <scope>NUCLEOTIDE SEQUENCE [LARGE SCALE GENOMIC DNA]</scope>
    <source>
        <strain>FGSC A4 / ATCC 38163 / CBS 112.46 / NRRL 194 / M139</strain>
    </source>
</reference>
<reference key="2">
    <citation type="journal article" date="2009" name="Fungal Genet. Biol.">
        <title>The 2008 update of the Aspergillus nidulans genome annotation: a community effort.</title>
        <authorList>
            <person name="Wortman J.R."/>
            <person name="Gilsenan J.M."/>
            <person name="Joardar V."/>
            <person name="Deegan J."/>
            <person name="Clutterbuck J."/>
            <person name="Andersen M.R."/>
            <person name="Archer D."/>
            <person name="Bencina M."/>
            <person name="Braus G."/>
            <person name="Coutinho P."/>
            <person name="von Dohren H."/>
            <person name="Doonan J."/>
            <person name="Driessen A.J."/>
            <person name="Durek P."/>
            <person name="Espeso E."/>
            <person name="Fekete E."/>
            <person name="Flipphi M."/>
            <person name="Estrada C.G."/>
            <person name="Geysens S."/>
            <person name="Goldman G."/>
            <person name="de Groot P.W."/>
            <person name="Hansen K."/>
            <person name="Harris S.D."/>
            <person name="Heinekamp T."/>
            <person name="Helmstaedt K."/>
            <person name="Henrissat B."/>
            <person name="Hofmann G."/>
            <person name="Homan T."/>
            <person name="Horio T."/>
            <person name="Horiuchi H."/>
            <person name="James S."/>
            <person name="Jones M."/>
            <person name="Karaffa L."/>
            <person name="Karanyi Z."/>
            <person name="Kato M."/>
            <person name="Keller N."/>
            <person name="Kelly D.E."/>
            <person name="Kiel J.A."/>
            <person name="Kim J.M."/>
            <person name="van der Klei I.J."/>
            <person name="Klis F.M."/>
            <person name="Kovalchuk A."/>
            <person name="Krasevec N."/>
            <person name="Kubicek C.P."/>
            <person name="Liu B."/>
            <person name="Maccabe A."/>
            <person name="Meyer V."/>
            <person name="Mirabito P."/>
            <person name="Miskei M."/>
            <person name="Mos M."/>
            <person name="Mullins J."/>
            <person name="Nelson D.R."/>
            <person name="Nielsen J."/>
            <person name="Oakley B.R."/>
            <person name="Osmani S.A."/>
            <person name="Pakula T."/>
            <person name="Paszewski A."/>
            <person name="Paulsen I."/>
            <person name="Pilsyk S."/>
            <person name="Pocsi I."/>
            <person name="Punt P.J."/>
            <person name="Ram A.F."/>
            <person name="Ren Q."/>
            <person name="Robellet X."/>
            <person name="Robson G."/>
            <person name="Seiboth B."/>
            <person name="van Solingen P."/>
            <person name="Specht T."/>
            <person name="Sun J."/>
            <person name="Taheri-Talesh N."/>
            <person name="Takeshita N."/>
            <person name="Ussery D."/>
            <person name="vanKuyk P.A."/>
            <person name="Visser H."/>
            <person name="van de Vondervoort P.J."/>
            <person name="de Vries R.P."/>
            <person name="Walton J."/>
            <person name="Xiang X."/>
            <person name="Xiong Y."/>
            <person name="Zeng A.P."/>
            <person name="Brandt B.W."/>
            <person name="Cornell M.J."/>
            <person name="van den Hondel C.A."/>
            <person name="Visser J."/>
            <person name="Oliver S.G."/>
            <person name="Turner G."/>
        </authorList>
    </citation>
    <scope>GENOME REANNOTATION</scope>
    <source>
        <strain>FGSC A4 / ATCC 38163 / CBS 112.46 / NRRL 194 / M139</strain>
    </source>
</reference>
<evidence type="ECO:0000250" key="1"/>
<evidence type="ECO:0000256" key="2">
    <source>
        <dbReference type="SAM" id="MobiDB-lite"/>
    </source>
</evidence>
<evidence type="ECO:0000305" key="3"/>
<protein>
    <recommendedName>
        <fullName>Pre-mRNA polyadenylation factor fip1</fullName>
    </recommendedName>
</protein>